<proteinExistence type="inferred from homology"/>
<dbReference type="EMBL" id="CP000103">
    <property type="protein sequence ID" value="ABB74065.1"/>
    <property type="molecule type" value="Genomic_DNA"/>
</dbReference>
<dbReference type="RefSeq" id="WP_011380115.1">
    <property type="nucleotide sequence ID" value="NC_007614.1"/>
</dbReference>
<dbReference type="SMR" id="Q2YB06"/>
<dbReference type="STRING" id="323848.Nmul_A0758"/>
<dbReference type="KEGG" id="nmu:Nmul_A0758"/>
<dbReference type="eggNOG" id="COG0222">
    <property type="taxonomic scope" value="Bacteria"/>
</dbReference>
<dbReference type="HOGENOM" id="CLU_086499_3_2_4"/>
<dbReference type="OrthoDB" id="9811748at2"/>
<dbReference type="Proteomes" id="UP000002718">
    <property type="component" value="Chromosome"/>
</dbReference>
<dbReference type="GO" id="GO:0022625">
    <property type="term" value="C:cytosolic large ribosomal subunit"/>
    <property type="evidence" value="ECO:0007669"/>
    <property type="project" value="TreeGrafter"/>
</dbReference>
<dbReference type="GO" id="GO:0003729">
    <property type="term" value="F:mRNA binding"/>
    <property type="evidence" value="ECO:0007669"/>
    <property type="project" value="TreeGrafter"/>
</dbReference>
<dbReference type="GO" id="GO:0003735">
    <property type="term" value="F:structural constituent of ribosome"/>
    <property type="evidence" value="ECO:0007669"/>
    <property type="project" value="InterPro"/>
</dbReference>
<dbReference type="GO" id="GO:0006412">
    <property type="term" value="P:translation"/>
    <property type="evidence" value="ECO:0007669"/>
    <property type="project" value="UniProtKB-UniRule"/>
</dbReference>
<dbReference type="CDD" id="cd00387">
    <property type="entry name" value="Ribosomal_L7_L12"/>
    <property type="match status" value="1"/>
</dbReference>
<dbReference type="FunFam" id="3.30.1390.10:FF:000001">
    <property type="entry name" value="50S ribosomal protein L7/L12"/>
    <property type="match status" value="1"/>
</dbReference>
<dbReference type="Gene3D" id="3.30.1390.10">
    <property type="match status" value="1"/>
</dbReference>
<dbReference type="Gene3D" id="1.20.5.710">
    <property type="entry name" value="Single helix bin"/>
    <property type="match status" value="1"/>
</dbReference>
<dbReference type="HAMAP" id="MF_00368">
    <property type="entry name" value="Ribosomal_bL12"/>
    <property type="match status" value="1"/>
</dbReference>
<dbReference type="InterPro" id="IPR000206">
    <property type="entry name" value="Ribosomal_bL12"/>
</dbReference>
<dbReference type="InterPro" id="IPR013823">
    <property type="entry name" value="Ribosomal_bL12_C"/>
</dbReference>
<dbReference type="InterPro" id="IPR014719">
    <property type="entry name" value="Ribosomal_bL12_C/ClpS-like"/>
</dbReference>
<dbReference type="InterPro" id="IPR008932">
    <property type="entry name" value="Ribosomal_bL12_oligo"/>
</dbReference>
<dbReference type="InterPro" id="IPR036235">
    <property type="entry name" value="Ribosomal_bL12_oligo_N_sf"/>
</dbReference>
<dbReference type="NCBIfam" id="TIGR00855">
    <property type="entry name" value="L12"/>
    <property type="match status" value="1"/>
</dbReference>
<dbReference type="PANTHER" id="PTHR45987">
    <property type="entry name" value="39S RIBOSOMAL PROTEIN L12"/>
    <property type="match status" value="1"/>
</dbReference>
<dbReference type="PANTHER" id="PTHR45987:SF4">
    <property type="entry name" value="LARGE RIBOSOMAL SUBUNIT PROTEIN BL12M"/>
    <property type="match status" value="1"/>
</dbReference>
<dbReference type="Pfam" id="PF00542">
    <property type="entry name" value="Ribosomal_L12"/>
    <property type="match status" value="1"/>
</dbReference>
<dbReference type="Pfam" id="PF16320">
    <property type="entry name" value="Ribosomal_L12_N"/>
    <property type="match status" value="1"/>
</dbReference>
<dbReference type="SUPFAM" id="SSF54736">
    <property type="entry name" value="ClpS-like"/>
    <property type="match status" value="1"/>
</dbReference>
<dbReference type="SUPFAM" id="SSF48300">
    <property type="entry name" value="Ribosomal protein L7/12, oligomerisation (N-terminal) domain"/>
    <property type="match status" value="1"/>
</dbReference>
<comment type="function">
    <text evidence="1">Forms part of the ribosomal stalk which helps the ribosome interact with GTP-bound translation factors. Is thus essential for accurate translation.</text>
</comment>
<comment type="subunit">
    <text evidence="1">Homodimer. Part of the ribosomal stalk of the 50S ribosomal subunit. Forms a multimeric L10(L12)X complex, where L10 forms an elongated spine to which 2 to 4 L12 dimers bind in a sequential fashion. Binds GTP-bound translation factors.</text>
</comment>
<comment type="similarity">
    <text evidence="1">Belongs to the bacterial ribosomal protein bL12 family.</text>
</comment>
<sequence length="126" mass="12740">MAIAKAEILDAIANMTVLELSQLIKEMEEKFGVSAAAAAVVAAAPAAGAAAAPAEEQTEFTVMLTAVGESKVNVIKVVRAVTGLGLKEAKDLVDGAPKPVKEGIAKADAEAIQKQLAEAGATAEIK</sequence>
<accession>Q2YB06</accession>
<keyword id="KW-1185">Reference proteome</keyword>
<keyword id="KW-0687">Ribonucleoprotein</keyword>
<keyword id="KW-0689">Ribosomal protein</keyword>
<reference key="1">
    <citation type="submission" date="2005-08" db="EMBL/GenBank/DDBJ databases">
        <title>Complete sequence of chromosome 1 of Nitrosospira multiformis ATCC 25196.</title>
        <authorList>
            <person name="Copeland A."/>
            <person name="Lucas S."/>
            <person name="Lapidus A."/>
            <person name="Barry K."/>
            <person name="Detter J.C."/>
            <person name="Glavina T."/>
            <person name="Hammon N."/>
            <person name="Israni S."/>
            <person name="Pitluck S."/>
            <person name="Chain P."/>
            <person name="Malfatti S."/>
            <person name="Shin M."/>
            <person name="Vergez L."/>
            <person name="Schmutz J."/>
            <person name="Larimer F."/>
            <person name="Land M."/>
            <person name="Hauser L."/>
            <person name="Kyrpides N."/>
            <person name="Lykidis A."/>
            <person name="Richardson P."/>
        </authorList>
    </citation>
    <scope>NUCLEOTIDE SEQUENCE [LARGE SCALE GENOMIC DNA]</scope>
    <source>
        <strain>ATCC 25196 / NCIMB 11849 / C 71</strain>
    </source>
</reference>
<organism>
    <name type="scientific">Nitrosospira multiformis (strain ATCC 25196 / NCIMB 11849 / C 71)</name>
    <dbReference type="NCBI Taxonomy" id="323848"/>
    <lineage>
        <taxon>Bacteria</taxon>
        <taxon>Pseudomonadati</taxon>
        <taxon>Pseudomonadota</taxon>
        <taxon>Betaproteobacteria</taxon>
        <taxon>Nitrosomonadales</taxon>
        <taxon>Nitrosomonadaceae</taxon>
        <taxon>Nitrosospira</taxon>
    </lineage>
</organism>
<gene>
    <name evidence="1" type="primary">rplL</name>
    <name type="ordered locus">Nmul_A0758</name>
</gene>
<evidence type="ECO:0000255" key="1">
    <source>
        <dbReference type="HAMAP-Rule" id="MF_00368"/>
    </source>
</evidence>
<evidence type="ECO:0000305" key="2"/>
<name>RL7_NITMU</name>
<feature type="chain" id="PRO_0000243454" description="Large ribosomal subunit protein bL12">
    <location>
        <begin position="1"/>
        <end position="126"/>
    </location>
</feature>
<protein>
    <recommendedName>
        <fullName evidence="1">Large ribosomal subunit protein bL12</fullName>
    </recommendedName>
    <alternativeName>
        <fullName evidence="2">50S ribosomal protein L7/L12</fullName>
    </alternativeName>
</protein>